<accession>A8IC48</accession>
<evidence type="ECO:0000255" key="1">
    <source>
        <dbReference type="HAMAP-Rule" id="MF_03048"/>
    </source>
</evidence>
<dbReference type="EMBL" id="DS496115">
    <property type="protein sequence ID" value="EDP06508.1"/>
    <property type="molecule type" value="Genomic_DNA"/>
</dbReference>
<dbReference type="RefSeq" id="XP_001702729.1">
    <property type="nucleotide sequence ID" value="XM_001702677.1"/>
</dbReference>
<dbReference type="SMR" id="A8IC48"/>
<dbReference type="PaxDb" id="3055-EDP06508"/>
<dbReference type="eggNOG" id="KOG4146">
    <property type="taxonomic scope" value="Eukaryota"/>
</dbReference>
<dbReference type="HOGENOM" id="CLU_148208_0_1_1"/>
<dbReference type="UniPathway" id="UPA00988"/>
<dbReference type="GO" id="GO:0005829">
    <property type="term" value="C:cytosol"/>
    <property type="evidence" value="ECO:0007669"/>
    <property type="project" value="UniProtKB-UniRule"/>
</dbReference>
<dbReference type="GO" id="GO:0032447">
    <property type="term" value="P:protein urmylation"/>
    <property type="evidence" value="ECO:0007669"/>
    <property type="project" value="UniProtKB-UniRule"/>
</dbReference>
<dbReference type="GO" id="GO:0034227">
    <property type="term" value="P:tRNA thio-modification"/>
    <property type="evidence" value="ECO:0007669"/>
    <property type="project" value="UniProtKB-UniRule"/>
</dbReference>
<dbReference type="GO" id="GO:0002098">
    <property type="term" value="P:tRNA wobble uridine modification"/>
    <property type="evidence" value="ECO:0007669"/>
    <property type="project" value="UniProtKB-UniRule"/>
</dbReference>
<dbReference type="CDD" id="cd01764">
    <property type="entry name" value="Ubl_Urm1"/>
    <property type="match status" value="1"/>
</dbReference>
<dbReference type="Gene3D" id="3.10.20.30">
    <property type="match status" value="1"/>
</dbReference>
<dbReference type="HAMAP" id="MF_03048">
    <property type="entry name" value="Urm1"/>
    <property type="match status" value="1"/>
</dbReference>
<dbReference type="InterPro" id="IPR012675">
    <property type="entry name" value="Beta-grasp_dom_sf"/>
</dbReference>
<dbReference type="InterPro" id="IPR016155">
    <property type="entry name" value="Mopterin_synth/thiamin_S_b"/>
</dbReference>
<dbReference type="InterPro" id="IPR015221">
    <property type="entry name" value="Urm1"/>
</dbReference>
<dbReference type="PANTHER" id="PTHR14986">
    <property type="entry name" value="RURM1 PROTEIN"/>
    <property type="match status" value="1"/>
</dbReference>
<dbReference type="Pfam" id="PF09138">
    <property type="entry name" value="Urm1"/>
    <property type="match status" value="1"/>
</dbReference>
<dbReference type="PIRSF" id="PIRSF037379">
    <property type="entry name" value="Ubiquitin-related_modifier_1"/>
    <property type="match status" value="1"/>
</dbReference>
<dbReference type="SUPFAM" id="SSF54285">
    <property type="entry name" value="MoaD/ThiS"/>
    <property type="match status" value="1"/>
</dbReference>
<reference key="1">
    <citation type="journal article" date="2007" name="Science">
        <title>The Chlamydomonas genome reveals the evolution of key animal and plant functions.</title>
        <authorList>
            <person name="Merchant S.S."/>
            <person name="Prochnik S.E."/>
            <person name="Vallon O."/>
            <person name="Harris E.H."/>
            <person name="Karpowicz S.J."/>
            <person name="Witman G.B."/>
            <person name="Terry A."/>
            <person name="Salamov A."/>
            <person name="Fritz-Laylin L.K."/>
            <person name="Marechal-Drouard L."/>
            <person name="Marshall W.F."/>
            <person name="Qu L.H."/>
            <person name="Nelson D.R."/>
            <person name="Sanderfoot A.A."/>
            <person name="Spalding M.H."/>
            <person name="Kapitonov V.V."/>
            <person name="Ren Q."/>
            <person name="Ferris P."/>
            <person name="Lindquist E."/>
            <person name="Shapiro H."/>
            <person name="Lucas S.M."/>
            <person name="Grimwood J."/>
            <person name="Schmutz J."/>
            <person name="Cardol P."/>
            <person name="Cerutti H."/>
            <person name="Chanfreau G."/>
            <person name="Chen C.L."/>
            <person name="Cognat V."/>
            <person name="Croft M.T."/>
            <person name="Dent R."/>
            <person name="Dutcher S."/>
            <person name="Fernandez E."/>
            <person name="Fukuzawa H."/>
            <person name="Gonzalez-Ballester D."/>
            <person name="Gonzalez-Halphen D."/>
            <person name="Hallmann A."/>
            <person name="Hanikenne M."/>
            <person name="Hippler M."/>
            <person name="Inwood W."/>
            <person name="Jabbari K."/>
            <person name="Kalanon M."/>
            <person name="Kuras R."/>
            <person name="Lefebvre P.A."/>
            <person name="Lemaire S.D."/>
            <person name="Lobanov A.V."/>
            <person name="Lohr M."/>
            <person name="Manuell A."/>
            <person name="Meier I."/>
            <person name="Mets L."/>
            <person name="Mittag M."/>
            <person name="Mittelmeier T."/>
            <person name="Moroney J.V."/>
            <person name="Moseley J."/>
            <person name="Napoli C."/>
            <person name="Nedelcu A.M."/>
            <person name="Niyogi K."/>
            <person name="Novoselov S.V."/>
            <person name="Paulsen I.T."/>
            <person name="Pazour G.J."/>
            <person name="Purton S."/>
            <person name="Ral J.P."/>
            <person name="Riano-Pachon D.M."/>
            <person name="Riekhof W."/>
            <person name="Rymarquis L."/>
            <person name="Schroda M."/>
            <person name="Stern D."/>
            <person name="Umen J."/>
            <person name="Willows R."/>
            <person name="Wilson N."/>
            <person name="Zimmer S.L."/>
            <person name="Allmer J."/>
            <person name="Balk J."/>
            <person name="Bisova K."/>
            <person name="Chen C.J."/>
            <person name="Elias M."/>
            <person name="Gendler K."/>
            <person name="Hauser C."/>
            <person name="Lamb M.R."/>
            <person name="Ledford H."/>
            <person name="Long J.C."/>
            <person name="Minagawa J."/>
            <person name="Page M.D."/>
            <person name="Pan J."/>
            <person name="Pootakham W."/>
            <person name="Roje S."/>
            <person name="Rose A."/>
            <person name="Stahlberg E."/>
            <person name="Terauchi A.M."/>
            <person name="Yang P."/>
            <person name="Ball S."/>
            <person name="Bowler C."/>
            <person name="Dieckmann C.L."/>
            <person name="Gladyshev V.N."/>
            <person name="Green P."/>
            <person name="Jorgensen R."/>
            <person name="Mayfield S."/>
            <person name="Mueller-Roeber B."/>
            <person name="Rajamani S."/>
            <person name="Sayre R.T."/>
            <person name="Brokstein P."/>
            <person name="Dubchak I."/>
            <person name="Goodstein D."/>
            <person name="Hornick L."/>
            <person name="Huang Y.W."/>
            <person name="Jhaveri J."/>
            <person name="Luo Y."/>
            <person name="Martinez D."/>
            <person name="Ngau W.C."/>
            <person name="Otillar B."/>
            <person name="Poliakov A."/>
            <person name="Porter A."/>
            <person name="Szajkowski L."/>
            <person name="Werner G."/>
            <person name="Zhou K."/>
            <person name="Grigoriev I.V."/>
            <person name="Rokhsar D.S."/>
            <person name="Grossman A.R."/>
        </authorList>
    </citation>
    <scope>NUCLEOTIDE SEQUENCE [LARGE SCALE GENOMIC DNA]</scope>
    <source>
        <strain>CC-503</strain>
        <strain>cw92</strain>
    </source>
</reference>
<organism>
    <name type="scientific">Chlamydomonas reinhardtii</name>
    <name type="common">Chlamydomonas smithii</name>
    <dbReference type="NCBI Taxonomy" id="3055"/>
    <lineage>
        <taxon>Eukaryota</taxon>
        <taxon>Viridiplantae</taxon>
        <taxon>Chlorophyta</taxon>
        <taxon>core chlorophytes</taxon>
        <taxon>Chlorophyceae</taxon>
        <taxon>CS clade</taxon>
        <taxon>Chlamydomonadales</taxon>
        <taxon>Chlamydomonadaceae</taxon>
        <taxon>Chlamydomonas</taxon>
    </lineage>
</organism>
<name>URM1_CHLRE</name>
<sequence>MVKVKIEFSGGLELLFGNQKQHDVDVPVQEGKQLTAGHLIAWTRDNMLRERPELFVKGHTVRPGILVLINECDWELSGATESTISDGDVVVFISTLHGG</sequence>
<feature type="chain" id="PRO_0000367872" description="Ubiquitin-related modifier 1 homolog">
    <location>
        <begin position="1"/>
        <end position="99"/>
    </location>
</feature>
<feature type="modified residue" description="1-thioglycine" evidence="1">
    <location>
        <position position="99"/>
    </location>
</feature>
<feature type="cross-link" description="Glycyl lysine isopeptide (Gly-Lys) (interchain with K-? in acceptor proteins)" evidence="1">
    <location>
        <position position="99"/>
    </location>
</feature>
<protein>
    <recommendedName>
        <fullName evidence="1">Ubiquitin-related modifier 1 homolog</fullName>
    </recommendedName>
</protein>
<keyword id="KW-0963">Cytoplasm</keyword>
<keyword id="KW-1017">Isopeptide bond</keyword>
<keyword id="KW-0819">tRNA processing</keyword>
<keyword id="KW-0833">Ubl conjugation pathway</keyword>
<proteinExistence type="inferred from homology"/>
<comment type="function">
    <text evidence="1">Acts as a sulfur carrier required for 2-thiolation of mcm(5)S(2)U at tRNA wobble positions of cytosolic tRNA(Lys), tRNA(Glu) and tRNA(Gln). Serves as sulfur donor in tRNA 2-thiolation reaction by being thiocarboxylated (-COSH) at its C-terminus by MOCS3. The sulfur is then transferred to tRNA to form 2-thiolation of mcm(5)S(2)U. Also acts as a ubiquitin-like protein (UBL) that is covalently conjugated via an isopeptide bond to lysine residues of target proteins. The thiocarboxylated form serves as substrate for conjugation and oxidative stress specifically induces the formation of UBL-protein conjugates.</text>
</comment>
<comment type="pathway">
    <text evidence="1">tRNA modification; 5-methoxycarbonylmethyl-2-thiouridine-tRNA biosynthesis.</text>
</comment>
<comment type="subcellular location">
    <subcellularLocation>
        <location evidence="1">Cytoplasm</location>
    </subcellularLocation>
</comment>
<comment type="PTM">
    <text evidence="1">C-terminal thiocarboxylation occurs in 2 steps, it is first acyl-adenylated (-COAMP) via the hesA/moeB/thiF part of the MOCS3 homolog, then thiocarboxylated (-COSH) via the rhodanese domain of the MOCS3 homolog.</text>
</comment>
<comment type="similarity">
    <text evidence="1">Belongs to the URM1 family.</text>
</comment>
<gene>
    <name evidence="1" type="primary">URM1</name>
    <name type="ORF">CHLREDRAFT_111518</name>
</gene>